<protein>
    <recommendedName>
        <fullName evidence="1">Ribosome maturation factor RimP</fullName>
    </recommendedName>
</protein>
<evidence type="ECO:0000255" key="1">
    <source>
        <dbReference type="HAMAP-Rule" id="MF_01077"/>
    </source>
</evidence>
<evidence type="ECO:0000305" key="2"/>
<comment type="function">
    <text evidence="1">Required for maturation of 30S ribosomal subunits.</text>
</comment>
<comment type="subcellular location">
    <subcellularLocation>
        <location evidence="1">Cytoplasm</location>
    </subcellularLocation>
</comment>
<comment type="similarity">
    <text evidence="1">Belongs to the RimP family.</text>
</comment>
<comment type="sequence caution" evidence="2">
    <conflict type="erroneous initiation">
        <sequence resource="EMBL-CDS" id="ABI57292"/>
    </conflict>
</comment>
<reference key="1">
    <citation type="submission" date="2006-08" db="EMBL/GenBank/DDBJ databases">
        <title>Complete sequence of Alkalilimnicola ehrilichei MLHE-1.</title>
        <authorList>
            <person name="Copeland A."/>
            <person name="Lucas S."/>
            <person name="Lapidus A."/>
            <person name="Barry K."/>
            <person name="Detter J.C."/>
            <person name="Glavina del Rio T."/>
            <person name="Hammon N."/>
            <person name="Israni S."/>
            <person name="Dalin E."/>
            <person name="Tice H."/>
            <person name="Pitluck S."/>
            <person name="Sims D."/>
            <person name="Brettin T."/>
            <person name="Bruce D."/>
            <person name="Han C."/>
            <person name="Tapia R."/>
            <person name="Gilna P."/>
            <person name="Schmutz J."/>
            <person name="Larimer F."/>
            <person name="Land M."/>
            <person name="Hauser L."/>
            <person name="Kyrpides N."/>
            <person name="Mikhailova N."/>
            <person name="Oremland R.S."/>
            <person name="Hoeft S.E."/>
            <person name="Switzer-Blum J."/>
            <person name="Kulp T."/>
            <person name="King G."/>
            <person name="Tabita R."/>
            <person name="Witte B."/>
            <person name="Santini J.M."/>
            <person name="Basu P."/>
            <person name="Hollibaugh J.T."/>
            <person name="Xie G."/>
            <person name="Stolz J.F."/>
            <person name="Richardson P."/>
        </authorList>
    </citation>
    <scope>NUCLEOTIDE SEQUENCE [LARGE SCALE GENOMIC DNA]</scope>
    <source>
        <strain>ATCC BAA-1101 / DSM 17681 / MLHE-1</strain>
    </source>
</reference>
<dbReference type="EMBL" id="CP000453">
    <property type="protein sequence ID" value="ABI57292.1"/>
    <property type="status" value="ALT_INIT"/>
    <property type="molecule type" value="Genomic_DNA"/>
</dbReference>
<dbReference type="RefSeq" id="WP_041718015.1">
    <property type="nucleotide sequence ID" value="NC_008340.1"/>
</dbReference>
<dbReference type="SMR" id="Q0A795"/>
<dbReference type="KEGG" id="aeh:Mlg_1950"/>
<dbReference type="eggNOG" id="COG0779">
    <property type="taxonomic scope" value="Bacteria"/>
</dbReference>
<dbReference type="HOGENOM" id="CLU_070525_1_1_6"/>
<dbReference type="OrthoDB" id="9805006at2"/>
<dbReference type="Proteomes" id="UP000001962">
    <property type="component" value="Chromosome"/>
</dbReference>
<dbReference type="GO" id="GO:0005829">
    <property type="term" value="C:cytosol"/>
    <property type="evidence" value="ECO:0007669"/>
    <property type="project" value="TreeGrafter"/>
</dbReference>
<dbReference type="GO" id="GO:0000028">
    <property type="term" value="P:ribosomal small subunit assembly"/>
    <property type="evidence" value="ECO:0007669"/>
    <property type="project" value="TreeGrafter"/>
</dbReference>
<dbReference type="GO" id="GO:0006412">
    <property type="term" value="P:translation"/>
    <property type="evidence" value="ECO:0007669"/>
    <property type="project" value="TreeGrafter"/>
</dbReference>
<dbReference type="CDD" id="cd01734">
    <property type="entry name" value="YlxS_C"/>
    <property type="match status" value="1"/>
</dbReference>
<dbReference type="FunFam" id="3.30.300.70:FF:000001">
    <property type="entry name" value="Ribosome maturation factor RimP"/>
    <property type="match status" value="1"/>
</dbReference>
<dbReference type="Gene3D" id="2.30.30.180">
    <property type="entry name" value="Ribosome maturation factor RimP, C-terminal domain"/>
    <property type="match status" value="1"/>
</dbReference>
<dbReference type="Gene3D" id="3.30.300.70">
    <property type="entry name" value="RimP-like superfamily, N-terminal"/>
    <property type="match status" value="1"/>
</dbReference>
<dbReference type="HAMAP" id="MF_01077">
    <property type="entry name" value="RimP"/>
    <property type="match status" value="1"/>
</dbReference>
<dbReference type="InterPro" id="IPR003728">
    <property type="entry name" value="Ribosome_maturation_RimP"/>
</dbReference>
<dbReference type="InterPro" id="IPR028998">
    <property type="entry name" value="RimP_C"/>
</dbReference>
<dbReference type="InterPro" id="IPR036847">
    <property type="entry name" value="RimP_C_sf"/>
</dbReference>
<dbReference type="InterPro" id="IPR028989">
    <property type="entry name" value="RimP_N"/>
</dbReference>
<dbReference type="InterPro" id="IPR035956">
    <property type="entry name" value="RimP_N_sf"/>
</dbReference>
<dbReference type="NCBIfam" id="NF000927">
    <property type="entry name" value="PRK00092.1-1"/>
    <property type="match status" value="1"/>
</dbReference>
<dbReference type="PANTHER" id="PTHR33867">
    <property type="entry name" value="RIBOSOME MATURATION FACTOR RIMP"/>
    <property type="match status" value="1"/>
</dbReference>
<dbReference type="PANTHER" id="PTHR33867:SF1">
    <property type="entry name" value="RIBOSOME MATURATION FACTOR RIMP"/>
    <property type="match status" value="1"/>
</dbReference>
<dbReference type="Pfam" id="PF17384">
    <property type="entry name" value="DUF150_C"/>
    <property type="match status" value="1"/>
</dbReference>
<dbReference type="Pfam" id="PF02576">
    <property type="entry name" value="RimP_N"/>
    <property type="match status" value="1"/>
</dbReference>
<dbReference type="SUPFAM" id="SSF74942">
    <property type="entry name" value="YhbC-like, C-terminal domain"/>
    <property type="match status" value="1"/>
</dbReference>
<dbReference type="SUPFAM" id="SSF75420">
    <property type="entry name" value="YhbC-like, N-terminal domain"/>
    <property type="match status" value="1"/>
</dbReference>
<keyword id="KW-0963">Cytoplasm</keyword>
<keyword id="KW-1185">Reference proteome</keyword>
<keyword id="KW-0690">Ribosome biogenesis</keyword>
<sequence length="152" mass="16680">MAATEDTLYALIDPLLTGMGYELVGIEYGGPAGKRLLRIYIDSPDGITLDDCETCSRQISAVLDVEDPIPGEYTLEISSPGLDRPIFKASDYDRFAGEQIKIRLSAPWEGRRRFKGVLAGLGDEGVRVVEAQGDEVQIPLDLIEKARLILEP</sequence>
<name>RIMP_ALKEH</name>
<gene>
    <name evidence="1" type="primary">rimP</name>
    <name type="ordered locus">Mlg_1950</name>
</gene>
<proteinExistence type="inferred from homology"/>
<feature type="chain" id="PRO_0000384595" description="Ribosome maturation factor RimP">
    <location>
        <begin position="1"/>
        <end position="152"/>
    </location>
</feature>
<organism>
    <name type="scientific">Alkalilimnicola ehrlichii (strain ATCC BAA-1101 / DSM 17681 / MLHE-1)</name>
    <dbReference type="NCBI Taxonomy" id="187272"/>
    <lineage>
        <taxon>Bacteria</taxon>
        <taxon>Pseudomonadati</taxon>
        <taxon>Pseudomonadota</taxon>
        <taxon>Gammaproteobacteria</taxon>
        <taxon>Chromatiales</taxon>
        <taxon>Ectothiorhodospiraceae</taxon>
        <taxon>Alkalilimnicola</taxon>
    </lineage>
</organism>
<accession>Q0A795</accession>